<organism>
    <name type="scientific">Methanocaldococcus jannaschii (strain ATCC 43067 / DSM 2661 / JAL-1 / JCM 10045 / NBRC 100440)</name>
    <name type="common">Methanococcus jannaschii</name>
    <dbReference type="NCBI Taxonomy" id="243232"/>
    <lineage>
        <taxon>Archaea</taxon>
        <taxon>Methanobacteriati</taxon>
        <taxon>Methanobacteriota</taxon>
        <taxon>Methanomada group</taxon>
        <taxon>Methanococci</taxon>
        <taxon>Methanococcales</taxon>
        <taxon>Methanocaldococcaceae</taxon>
        <taxon>Methanocaldococcus</taxon>
    </lineage>
</organism>
<keyword id="KW-0002">3D-structure</keyword>
<keyword id="KW-0963">Cytoplasm</keyword>
<keyword id="KW-0312">Gluconeogenesis</keyword>
<keyword id="KW-0324">Glycolysis</keyword>
<keyword id="KW-0413">Isomerase</keyword>
<keyword id="KW-1185">Reference proteome</keyword>
<dbReference type="EC" id="5.3.1.1" evidence="1 2"/>
<dbReference type="EMBL" id="L77117">
    <property type="protein sequence ID" value="AAB99546.1"/>
    <property type="molecule type" value="Genomic_DNA"/>
</dbReference>
<dbReference type="PIR" id="G64490">
    <property type="entry name" value="G64490"/>
</dbReference>
<dbReference type="RefSeq" id="WP_010871052.1">
    <property type="nucleotide sequence ID" value="NC_000909.1"/>
</dbReference>
<dbReference type="PDB" id="2H6R">
    <property type="method" value="X-ray"/>
    <property type="resolution" value="2.30 A"/>
    <property type="chains" value="A/B/C/D/E/F/G/H=1-219"/>
</dbReference>
<dbReference type="PDBsum" id="2H6R"/>
<dbReference type="SMR" id="Q58923"/>
<dbReference type="FunCoup" id="Q58923">
    <property type="interactions" value="292"/>
</dbReference>
<dbReference type="STRING" id="243232.MJ_1528"/>
<dbReference type="PaxDb" id="243232-MJ_1528"/>
<dbReference type="EnsemblBacteria" id="AAB99546">
    <property type="protein sequence ID" value="AAB99546"/>
    <property type="gene ID" value="MJ_1528"/>
</dbReference>
<dbReference type="GeneID" id="1452436"/>
<dbReference type="KEGG" id="mja:MJ_1528"/>
<dbReference type="eggNOG" id="arCOG01087">
    <property type="taxonomic scope" value="Archaea"/>
</dbReference>
<dbReference type="HOGENOM" id="CLU_104921_0_0_2"/>
<dbReference type="InParanoid" id="Q58923"/>
<dbReference type="OrthoDB" id="9465at2157"/>
<dbReference type="PhylomeDB" id="Q58923"/>
<dbReference type="BioCyc" id="MetaCyc:MONOMER-14589"/>
<dbReference type="BRENDA" id="5.3.1.1">
    <property type="organism ID" value="3260"/>
</dbReference>
<dbReference type="UniPathway" id="UPA00109">
    <property type="reaction ID" value="UER00189"/>
</dbReference>
<dbReference type="UniPathway" id="UPA00138"/>
<dbReference type="EvolutionaryTrace" id="Q58923"/>
<dbReference type="Proteomes" id="UP000000805">
    <property type="component" value="Chromosome"/>
</dbReference>
<dbReference type="GO" id="GO:0005829">
    <property type="term" value="C:cytosol"/>
    <property type="evidence" value="ECO:0000318"/>
    <property type="project" value="GO_Central"/>
</dbReference>
<dbReference type="GO" id="GO:0004807">
    <property type="term" value="F:triose-phosphate isomerase activity"/>
    <property type="evidence" value="ECO:0000318"/>
    <property type="project" value="GO_Central"/>
</dbReference>
<dbReference type="GO" id="GO:0006094">
    <property type="term" value="P:gluconeogenesis"/>
    <property type="evidence" value="ECO:0000318"/>
    <property type="project" value="GO_Central"/>
</dbReference>
<dbReference type="GO" id="GO:0046166">
    <property type="term" value="P:glyceraldehyde-3-phosphate biosynthetic process"/>
    <property type="evidence" value="ECO:0000318"/>
    <property type="project" value="GO_Central"/>
</dbReference>
<dbReference type="GO" id="GO:0019563">
    <property type="term" value="P:glycerol catabolic process"/>
    <property type="evidence" value="ECO:0000318"/>
    <property type="project" value="GO_Central"/>
</dbReference>
<dbReference type="GO" id="GO:0006096">
    <property type="term" value="P:glycolytic process"/>
    <property type="evidence" value="ECO:0000318"/>
    <property type="project" value="GO_Central"/>
</dbReference>
<dbReference type="CDD" id="cd00311">
    <property type="entry name" value="TIM"/>
    <property type="match status" value="1"/>
</dbReference>
<dbReference type="FunFam" id="3.20.20.70:FF:000223">
    <property type="entry name" value="Triosephosphate isomerase"/>
    <property type="match status" value="1"/>
</dbReference>
<dbReference type="Gene3D" id="3.20.20.70">
    <property type="entry name" value="Aldolase class I"/>
    <property type="match status" value="1"/>
</dbReference>
<dbReference type="HAMAP" id="MF_00147_A">
    <property type="entry name" value="TIM_A"/>
    <property type="match status" value="1"/>
</dbReference>
<dbReference type="InterPro" id="IPR013785">
    <property type="entry name" value="Aldolase_TIM"/>
</dbReference>
<dbReference type="InterPro" id="IPR035990">
    <property type="entry name" value="TIM_sf"/>
</dbReference>
<dbReference type="InterPro" id="IPR000652">
    <property type="entry name" value="Triosephosphate_isomerase"/>
</dbReference>
<dbReference type="InterPro" id="IPR022891">
    <property type="entry name" value="Triosephosphate_isomerase_arc"/>
</dbReference>
<dbReference type="InterPro" id="IPR020861">
    <property type="entry name" value="Triosephosphate_isomerase_AS"/>
</dbReference>
<dbReference type="NCBIfam" id="NF003302">
    <property type="entry name" value="PRK04302.1"/>
    <property type="match status" value="1"/>
</dbReference>
<dbReference type="NCBIfam" id="TIGR00419">
    <property type="entry name" value="tim"/>
    <property type="match status" value="1"/>
</dbReference>
<dbReference type="PANTHER" id="PTHR21139">
    <property type="entry name" value="TRIOSEPHOSPHATE ISOMERASE"/>
    <property type="match status" value="1"/>
</dbReference>
<dbReference type="PANTHER" id="PTHR21139:SF42">
    <property type="entry name" value="TRIOSEPHOSPHATE ISOMERASE"/>
    <property type="match status" value="1"/>
</dbReference>
<dbReference type="Pfam" id="PF00121">
    <property type="entry name" value="TIM"/>
    <property type="match status" value="1"/>
</dbReference>
<dbReference type="SUPFAM" id="SSF51351">
    <property type="entry name" value="Triosephosphate isomerase (TIM)"/>
    <property type="match status" value="1"/>
</dbReference>
<dbReference type="PROSITE" id="PS00171">
    <property type="entry name" value="TIM_1"/>
    <property type="match status" value="1"/>
</dbReference>
<dbReference type="PROSITE" id="PS51440">
    <property type="entry name" value="TIM_2"/>
    <property type="match status" value="1"/>
</dbReference>
<sequence>MLIVINYKTYNESIGNRGLEIAKIAEKVSEESGITIGVAPQFVDLRMIVENVNIPVYAQHIDNINPGSHTGHILAEAIKDCGCKGTLINHSEKRMLLADIEAVINKCKNLGLETIVCTNNINTSKAVAALSPDYIAVEPPELIGTGIPVSKANPEVVEGTVRAVKEINKDVKVLCGAGISKGEDVKAALDLGAEGVLLASGVVKAKNVEEAIRELIKFI</sequence>
<gene>
    <name evidence="1" type="primary">tpiA</name>
    <name type="ordered locus">MJ1528</name>
</gene>
<proteinExistence type="evidence at protein level"/>
<feature type="chain" id="PRO_0000090335" description="Triosephosphate isomerase">
    <location>
        <begin position="1"/>
        <end position="219"/>
    </location>
</feature>
<feature type="active site" description="Electrophile" evidence="1">
    <location>
        <position position="90"/>
    </location>
</feature>
<feature type="active site" description="Proton acceptor" evidence="1">
    <location>
        <position position="138"/>
    </location>
</feature>
<feature type="binding site" evidence="1">
    <location>
        <begin position="6"/>
        <end position="8"/>
    </location>
    <ligand>
        <name>substrate</name>
    </ligand>
</feature>
<feature type="binding site" evidence="1">
    <location>
        <position position="143"/>
    </location>
    <ligand>
        <name>substrate</name>
    </ligand>
</feature>
<feature type="binding site" evidence="1">
    <location>
        <position position="178"/>
    </location>
    <ligand>
        <name>substrate</name>
    </ligand>
</feature>
<feature type="binding site" evidence="1">
    <location>
        <begin position="199"/>
        <end position="200"/>
    </location>
    <ligand>
        <name>substrate</name>
    </ligand>
</feature>
<feature type="strand" evidence="4">
    <location>
        <begin position="3"/>
        <end position="6"/>
    </location>
</feature>
<feature type="helix" evidence="4">
    <location>
        <begin position="11"/>
        <end position="13"/>
    </location>
</feature>
<feature type="helix" evidence="4">
    <location>
        <begin position="16"/>
        <end position="32"/>
    </location>
</feature>
<feature type="strand" evidence="4">
    <location>
        <begin position="36"/>
        <end position="39"/>
    </location>
</feature>
<feature type="turn" evidence="4">
    <location>
        <begin position="42"/>
        <end position="44"/>
    </location>
</feature>
<feature type="helix" evidence="4">
    <location>
        <begin position="45"/>
        <end position="51"/>
    </location>
</feature>
<feature type="strand" evidence="4">
    <location>
        <begin position="56"/>
        <end position="59"/>
    </location>
</feature>
<feature type="strand" evidence="4">
    <location>
        <begin position="66"/>
        <end position="68"/>
    </location>
</feature>
<feature type="helix" evidence="4">
    <location>
        <begin position="75"/>
        <end position="80"/>
    </location>
</feature>
<feature type="strand" evidence="4">
    <location>
        <begin position="85"/>
        <end position="90"/>
    </location>
</feature>
<feature type="helix" evidence="4">
    <location>
        <begin position="97"/>
        <end position="110"/>
    </location>
</feature>
<feature type="strand" evidence="4">
    <location>
        <begin position="113"/>
        <end position="121"/>
    </location>
</feature>
<feature type="helix" evidence="4">
    <location>
        <begin position="122"/>
        <end position="127"/>
    </location>
</feature>
<feature type="turn" evidence="4">
    <location>
        <begin position="128"/>
        <end position="130"/>
    </location>
</feature>
<feature type="strand" evidence="4">
    <location>
        <begin position="133"/>
        <end position="137"/>
    </location>
</feature>
<feature type="helix" evidence="4">
    <location>
        <begin position="158"/>
        <end position="167"/>
    </location>
</feature>
<feature type="strand" evidence="4">
    <location>
        <begin position="172"/>
        <end position="175"/>
    </location>
</feature>
<feature type="helix" evidence="4">
    <location>
        <begin position="182"/>
        <end position="189"/>
    </location>
</feature>
<feature type="turn" evidence="4">
    <location>
        <begin position="190"/>
        <end position="192"/>
    </location>
</feature>
<feature type="strand" evidence="4">
    <location>
        <begin position="196"/>
        <end position="199"/>
    </location>
</feature>
<feature type="helix" evidence="4">
    <location>
        <begin position="200"/>
        <end position="203"/>
    </location>
</feature>
<feature type="helix" evidence="4">
    <location>
        <begin position="208"/>
        <end position="215"/>
    </location>
</feature>
<reference key="1">
    <citation type="journal article" date="1996" name="Science">
        <title>Complete genome sequence of the methanogenic archaeon, Methanococcus jannaschii.</title>
        <authorList>
            <person name="Bult C.J."/>
            <person name="White O."/>
            <person name="Olsen G.J."/>
            <person name="Zhou L."/>
            <person name="Fleischmann R.D."/>
            <person name="Sutton G.G."/>
            <person name="Blake J.A."/>
            <person name="FitzGerald L.M."/>
            <person name="Clayton R.A."/>
            <person name="Gocayne J.D."/>
            <person name="Kerlavage A.R."/>
            <person name="Dougherty B.A."/>
            <person name="Tomb J.-F."/>
            <person name="Adams M.D."/>
            <person name="Reich C.I."/>
            <person name="Overbeek R."/>
            <person name="Kirkness E.F."/>
            <person name="Weinstock K.G."/>
            <person name="Merrick J.M."/>
            <person name="Glodek A."/>
            <person name="Scott J.L."/>
            <person name="Geoghagen N.S.M."/>
            <person name="Weidman J.F."/>
            <person name="Fuhrmann J.L."/>
            <person name="Nguyen D."/>
            <person name="Utterback T.R."/>
            <person name="Kelley J.M."/>
            <person name="Peterson J.D."/>
            <person name="Sadow P.W."/>
            <person name="Hanna M.C."/>
            <person name="Cotton M.D."/>
            <person name="Roberts K.M."/>
            <person name="Hurst M.A."/>
            <person name="Kaine B.P."/>
            <person name="Borodovsky M."/>
            <person name="Klenk H.-P."/>
            <person name="Fraser C.M."/>
            <person name="Smith H.O."/>
            <person name="Woese C.R."/>
            <person name="Venter J.C."/>
        </authorList>
    </citation>
    <scope>NUCLEOTIDE SEQUENCE [LARGE SCALE GENOMIC DNA]</scope>
    <source>
        <strain>ATCC 43067 / DSM 2661 / JAL-1 / JCM 10045 / NBRC 100440</strain>
    </source>
</reference>
<reference key="2">
    <citation type="journal article" date="2007" name="Acta Crystallogr. D">
        <title>Structure of triosephosphate isomerase (TIM) from Methanocaldococcus jannaschii.</title>
        <authorList>
            <person name="Gayathri P."/>
            <person name="Banerjee M."/>
            <person name="Vijayalakshmi A."/>
            <person name="Azeez S."/>
            <person name="Balaram H."/>
            <person name="Balaram P."/>
            <person name="Murthy M.R."/>
        </authorList>
    </citation>
    <scope>X-RAY CRYSTALLOGRAPHY (2.3 ANGSTROMS) OF 3-219</scope>
    <scope>FUNCTION AS A TRIOSEPHOSPHATE ISOMERASE</scope>
    <scope>CATALYTIC ACTIVITY</scope>
    <scope>BIOPHYSICOCHEMICAL PROPERTIES</scope>
    <scope>SUBUNIT</scope>
</reference>
<comment type="function">
    <text evidence="1 2">Involved in the gluconeogenesis. Catalyzes stereospecifically the conversion of dihydroxyacetone phosphate (DHAP) to D-glyceraldehyde-3-phosphate (G3P).</text>
</comment>
<comment type="catalytic activity">
    <reaction evidence="1 2">
        <text>D-glyceraldehyde 3-phosphate = dihydroxyacetone phosphate</text>
        <dbReference type="Rhea" id="RHEA:18585"/>
        <dbReference type="ChEBI" id="CHEBI:57642"/>
        <dbReference type="ChEBI" id="CHEBI:59776"/>
        <dbReference type="EC" id="5.3.1.1"/>
    </reaction>
</comment>
<comment type="biophysicochemical properties">
    <temperatureDependence>
        <text evidence="2">The enzyme is active over the temperature range 20-60 degrees Celsius, showing an increase in specific activity with temperature.</text>
    </temperatureDependence>
</comment>
<comment type="pathway">
    <text evidence="1">Carbohydrate biosynthesis; gluconeogenesis.</text>
</comment>
<comment type="pathway">
    <text evidence="1">Carbohydrate degradation; glycolysis; D-glyceraldehyde 3-phosphate from glycerone phosphate: step 1/1.</text>
</comment>
<comment type="subunit">
    <text evidence="1 2">Homotetramer; dimer of dimers.</text>
</comment>
<comment type="subcellular location">
    <subcellularLocation>
        <location evidence="1">Cytoplasm</location>
    </subcellularLocation>
</comment>
<comment type="similarity">
    <text evidence="1">Belongs to the triosephosphate isomerase family.</text>
</comment>
<evidence type="ECO:0000255" key="1">
    <source>
        <dbReference type="HAMAP-Rule" id="MF_00147"/>
    </source>
</evidence>
<evidence type="ECO:0000269" key="2">
    <source>
    </source>
</evidence>
<evidence type="ECO:0000303" key="3">
    <source>
    </source>
</evidence>
<evidence type="ECO:0007829" key="4">
    <source>
        <dbReference type="PDB" id="2H6R"/>
    </source>
</evidence>
<name>TPIS_METJA</name>
<accession>Q58923</accession>
<protein>
    <recommendedName>
        <fullName evidence="1 3">Triosephosphate isomerase</fullName>
        <shortName evidence="1 3">TIM</shortName>
        <shortName evidence="1">TPI</shortName>
        <ecNumber evidence="1 2">5.3.1.1</ecNumber>
    </recommendedName>
    <alternativeName>
        <fullName evidence="1">Triose-phosphate isomerase</fullName>
    </alternativeName>
</protein>